<proteinExistence type="inferred from homology"/>
<comment type="function">
    <text evidence="1">Digests double-stranded RNA. Involved in the processing of primary rRNA transcript to yield the immediate precursors to the large and small rRNAs (23S and 16S). Processes some mRNAs, and tRNAs when they are encoded in the rRNA operon. Processes pre-crRNA and tracrRNA of type II CRISPR loci if present in the organism.</text>
</comment>
<comment type="catalytic activity">
    <reaction evidence="1">
        <text>Endonucleolytic cleavage to 5'-phosphomonoester.</text>
        <dbReference type="EC" id="3.1.26.3"/>
    </reaction>
</comment>
<comment type="cofactor">
    <cofactor evidence="1">
        <name>Mg(2+)</name>
        <dbReference type="ChEBI" id="CHEBI:18420"/>
    </cofactor>
</comment>
<comment type="subunit">
    <text evidence="1">Homodimer.</text>
</comment>
<comment type="subcellular location">
    <subcellularLocation>
        <location evidence="1">Cytoplasm</location>
    </subcellularLocation>
</comment>
<comment type="similarity">
    <text evidence="1">Belongs to the ribonuclease III family.</text>
</comment>
<gene>
    <name evidence="1" type="primary">rnc</name>
    <name type="ordered locus">glr2648</name>
</gene>
<dbReference type="EC" id="3.1.26.3" evidence="1"/>
<dbReference type="EMBL" id="BA000045">
    <property type="protein sequence ID" value="BAC90589.1"/>
    <property type="molecule type" value="Genomic_DNA"/>
</dbReference>
<dbReference type="RefSeq" id="NP_925594.1">
    <property type="nucleotide sequence ID" value="NC_005125.1"/>
</dbReference>
<dbReference type="RefSeq" id="WP_011142642.1">
    <property type="nucleotide sequence ID" value="NC_005125.1"/>
</dbReference>
<dbReference type="SMR" id="Q7NH89"/>
<dbReference type="FunCoup" id="Q7NH89">
    <property type="interactions" value="44"/>
</dbReference>
<dbReference type="STRING" id="251221.gene:10760149"/>
<dbReference type="EnsemblBacteria" id="BAC90589">
    <property type="protein sequence ID" value="BAC90589"/>
    <property type="gene ID" value="BAC90589"/>
</dbReference>
<dbReference type="KEGG" id="gvi:glr2648"/>
<dbReference type="PATRIC" id="fig|251221.4.peg.2685"/>
<dbReference type="eggNOG" id="COG0571">
    <property type="taxonomic scope" value="Bacteria"/>
</dbReference>
<dbReference type="HOGENOM" id="CLU_000907_1_3_3"/>
<dbReference type="InParanoid" id="Q7NH89"/>
<dbReference type="OrthoDB" id="9805026at2"/>
<dbReference type="PhylomeDB" id="Q7NH89"/>
<dbReference type="Proteomes" id="UP000000557">
    <property type="component" value="Chromosome"/>
</dbReference>
<dbReference type="GO" id="GO:0005829">
    <property type="term" value="C:cytosol"/>
    <property type="evidence" value="ECO:0000318"/>
    <property type="project" value="GO_Central"/>
</dbReference>
<dbReference type="GO" id="GO:0003725">
    <property type="term" value="F:double-stranded RNA binding"/>
    <property type="evidence" value="ECO:0000318"/>
    <property type="project" value="GO_Central"/>
</dbReference>
<dbReference type="GO" id="GO:0046872">
    <property type="term" value="F:metal ion binding"/>
    <property type="evidence" value="ECO:0007669"/>
    <property type="project" value="UniProtKB-KW"/>
</dbReference>
<dbReference type="GO" id="GO:0004525">
    <property type="term" value="F:ribonuclease III activity"/>
    <property type="evidence" value="ECO:0000318"/>
    <property type="project" value="GO_Central"/>
</dbReference>
<dbReference type="GO" id="GO:0019843">
    <property type="term" value="F:rRNA binding"/>
    <property type="evidence" value="ECO:0007669"/>
    <property type="project" value="UniProtKB-KW"/>
</dbReference>
<dbReference type="GO" id="GO:0006397">
    <property type="term" value="P:mRNA processing"/>
    <property type="evidence" value="ECO:0007669"/>
    <property type="project" value="UniProtKB-UniRule"/>
</dbReference>
<dbReference type="GO" id="GO:0010468">
    <property type="term" value="P:regulation of gene expression"/>
    <property type="evidence" value="ECO:0000318"/>
    <property type="project" value="GO_Central"/>
</dbReference>
<dbReference type="GO" id="GO:0006396">
    <property type="term" value="P:RNA processing"/>
    <property type="evidence" value="ECO:0000318"/>
    <property type="project" value="GO_Central"/>
</dbReference>
<dbReference type="GO" id="GO:0006364">
    <property type="term" value="P:rRNA processing"/>
    <property type="evidence" value="ECO:0007669"/>
    <property type="project" value="UniProtKB-UniRule"/>
</dbReference>
<dbReference type="GO" id="GO:0008033">
    <property type="term" value="P:tRNA processing"/>
    <property type="evidence" value="ECO:0007669"/>
    <property type="project" value="UniProtKB-KW"/>
</dbReference>
<dbReference type="CDD" id="cd10845">
    <property type="entry name" value="DSRM_RNAse_III_family"/>
    <property type="match status" value="1"/>
</dbReference>
<dbReference type="CDD" id="cd00593">
    <property type="entry name" value="RIBOc"/>
    <property type="match status" value="1"/>
</dbReference>
<dbReference type="FunFam" id="1.10.1520.10:FF:000001">
    <property type="entry name" value="Ribonuclease 3"/>
    <property type="match status" value="1"/>
</dbReference>
<dbReference type="FunFam" id="3.30.160.20:FF:000161">
    <property type="entry name" value="Ribonuclease 3"/>
    <property type="match status" value="1"/>
</dbReference>
<dbReference type="Gene3D" id="3.30.160.20">
    <property type="match status" value="1"/>
</dbReference>
<dbReference type="Gene3D" id="1.10.1520.10">
    <property type="entry name" value="Ribonuclease III domain"/>
    <property type="match status" value="1"/>
</dbReference>
<dbReference type="HAMAP" id="MF_00104">
    <property type="entry name" value="RNase_III"/>
    <property type="match status" value="1"/>
</dbReference>
<dbReference type="InterPro" id="IPR014720">
    <property type="entry name" value="dsRBD_dom"/>
</dbReference>
<dbReference type="InterPro" id="IPR011907">
    <property type="entry name" value="RNase_III"/>
</dbReference>
<dbReference type="InterPro" id="IPR000999">
    <property type="entry name" value="RNase_III_dom"/>
</dbReference>
<dbReference type="InterPro" id="IPR036389">
    <property type="entry name" value="RNase_III_sf"/>
</dbReference>
<dbReference type="NCBIfam" id="TIGR02191">
    <property type="entry name" value="RNaseIII"/>
    <property type="match status" value="1"/>
</dbReference>
<dbReference type="PANTHER" id="PTHR11207:SF0">
    <property type="entry name" value="RIBONUCLEASE 3"/>
    <property type="match status" value="1"/>
</dbReference>
<dbReference type="PANTHER" id="PTHR11207">
    <property type="entry name" value="RIBONUCLEASE III"/>
    <property type="match status" value="1"/>
</dbReference>
<dbReference type="Pfam" id="PF00035">
    <property type="entry name" value="dsrm"/>
    <property type="match status" value="1"/>
</dbReference>
<dbReference type="Pfam" id="PF14622">
    <property type="entry name" value="Ribonucleas_3_3"/>
    <property type="match status" value="1"/>
</dbReference>
<dbReference type="SMART" id="SM00358">
    <property type="entry name" value="DSRM"/>
    <property type="match status" value="1"/>
</dbReference>
<dbReference type="SMART" id="SM00535">
    <property type="entry name" value="RIBOc"/>
    <property type="match status" value="1"/>
</dbReference>
<dbReference type="SUPFAM" id="SSF54768">
    <property type="entry name" value="dsRNA-binding domain-like"/>
    <property type="match status" value="1"/>
</dbReference>
<dbReference type="SUPFAM" id="SSF69065">
    <property type="entry name" value="RNase III domain-like"/>
    <property type="match status" value="1"/>
</dbReference>
<dbReference type="PROSITE" id="PS50137">
    <property type="entry name" value="DS_RBD"/>
    <property type="match status" value="1"/>
</dbReference>
<dbReference type="PROSITE" id="PS50142">
    <property type="entry name" value="RNASE_3_2"/>
    <property type="match status" value="1"/>
</dbReference>
<protein>
    <recommendedName>
        <fullName evidence="1">Ribonuclease 3</fullName>
        <ecNumber evidence="1">3.1.26.3</ecNumber>
    </recommendedName>
    <alternativeName>
        <fullName evidence="1">Ribonuclease III</fullName>
        <shortName evidence="1">RNase III</shortName>
    </alternativeName>
</protein>
<organism>
    <name type="scientific">Gloeobacter violaceus (strain ATCC 29082 / PCC 7421)</name>
    <dbReference type="NCBI Taxonomy" id="251221"/>
    <lineage>
        <taxon>Bacteria</taxon>
        <taxon>Bacillati</taxon>
        <taxon>Cyanobacteriota</taxon>
        <taxon>Cyanophyceae</taxon>
        <taxon>Gloeobacterales</taxon>
        <taxon>Gloeobacteraceae</taxon>
        <taxon>Gloeobacter</taxon>
    </lineage>
</organism>
<sequence length="242" mass="26473">MAESALTPLRLAQLRRFAARFALSEPEALSWELLHRALIHPSWSAQEGGEDNDRLEFLGDEILRLLAAEFLYRADPELTVGEMTAVRSVLVSDVALAELAEGYDLGEFLVVGRSASGDERGRITRLADGFEAVIGALYLSTGDLGLIRPWLLPHLAHLAESVMADPTRGNHKSALQELTQKLAAGELPEYRLVDPGPPFRYEVWALGRLWGSGEGPSKKLAQQRAARGAYAALRSAFDTALQ</sequence>
<evidence type="ECO:0000255" key="1">
    <source>
        <dbReference type="HAMAP-Rule" id="MF_00104"/>
    </source>
</evidence>
<name>RNC_GLOVI</name>
<reference key="1">
    <citation type="journal article" date="2003" name="DNA Res.">
        <title>Complete genome structure of Gloeobacter violaceus PCC 7421, a cyanobacterium that lacks thylakoids.</title>
        <authorList>
            <person name="Nakamura Y."/>
            <person name="Kaneko T."/>
            <person name="Sato S."/>
            <person name="Mimuro M."/>
            <person name="Miyashita H."/>
            <person name="Tsuchiya T."/>
            <person name="Sasamoto S."/>
            <person name="Watanabe A."/>
            <person name="Kawashima K."/>
            <person name="Kishida Y."/>
            <person name="Kiyokawa C."/>
            <person name="Kohara M."/>
            <person name="Matsumoto M."/>
            <person name="Matsuno A."/>
            <person name="Nakazaki N."/>
            <person name="Shimpo S."/>
            <person name="Takeuchi C."/>
            <person name="Yamada M."/>
            <person name="Tabata S."/>
        </authorList>
    </citation>
    <scope>NUCLEOTIDE SEQUENCE [LARGE SCALE GENOMIC DNA]</scope>
    <source>
        <strain>ATCC 29082 / PCC 7421</strain>
    </source>
</reference>
<keyword id="KW-0963">Cytoplasm</keyword>
<keyword id="KW-0255">Endonuclease</keyword>
<keyword id="KW-0378">Hydrolase</keyword>
<keyword id="KW-0460">Magnesium</keyword>
<keyword id="KW-0479">Metal-binding</keyword>
<keyword id="KW-0507">mRNA processing</keyword>
<keyword id="KW-0540">Nuclease</keyword>
<keyword id="KW-1185">Reference proteome</keyword>
<keyword id="KW-0694">RNA-binding</keyword>
<keyword id="KW-0698">rRNA processing</keyword>
<keyword id="KW-0699">rRNA-binding</keyword>
<keyword id="KW-0819">tRNA processing</keyword>
<feature type="chain" id="PRO_0000416605" description="Ribonuclease 3">
    <location>
        <begin position="1"/>
        <end position="242"/>
    </location>
</feature>
<feature type="domain" description="RNase III" evidence="1">
    <location>
        <begin position="14"/>
        <end position="142"/>
    </location>
</feature>
<feature type="domain" description="DRBM" evidence="1">
    <location>
        <begin position="170"/>
        <end position="235"/>
    </location>
</feature>
<feature type="active site" evidence="1">
    <location>
        <position position="60"/>
    </location>
</feature>
<feature type="active site" evidence="1">
    <location>
        <position position="131"/>
    </location>
</feature>
<feature type="binding site" evidence="1">
    <location>
        <position position="56"/>
    </location>
    <ligand>
        <name>Mg(2+)</name>
        <dbReference type="ChEBI" id="CHEBI:18420"/>
    </ligand>
</feature>
<feature type="binding site" evidence="1">
    <location>
        <position position="128"/>
    </location>
    <ligand>
        <name>Mg(2+)</name>
        <dbReference type="ChEBI" id="CHEBI:18420"/>
    </ligand>
</feature>
<feature type="binding site" evidence="1">
    <location>
        <position position="131"/>
    </location>
    <ligand>
        <name>Mg(2+)</name>
        <dbReference type="ChEBI" id="CHEBI:18420"/>
    </ligand>
</feature>
<accession>Q7NH89</accession>